<feature type="chain" id="PRO_0000283960" description="Non-structural protein of 4.8 kDa">
    <location>
        <begin position="1"/>
        <end position="45"/>
    </location>
</feature>
<reference key="1">
    <citation type="journal article" date="2001" name="J. Gen. Virol.">
        <title>Comparison of genomic and predicted amino acid sequences of respiratory and enteric bovine coronaviruses isolated from the same animal with fatal shipping pneumonia.</title>
        <authorList>
            <person name="Chouljenko V.N."/>
            <person name="Lin X.Q."/>
            <person name="Storz J."/>
            <person name="Kousoulas K.G."/>
            <person name="Gorbalenya A.E."/>
        </authorList>
    </citation>
    <scope>NUCLEOTIDE SEQUENCE [GENOMIC RNA]</scope>
</reference>
<proteinExistence type="inferred from homology"/>
<name>NS48_CVBLU</name>
<protein>
    <recommendedName>
        <fullName>Non-structural protein of 4.8 kDa</fullName>
        <shortName>ns4.8</shortName>
    </recommendedName>
    <alternativeName>
        <fullName>4.8 kDa accessory protein</fullName>
    </alternativeName>
</protein>
<gene>
    <name type="ORF">4b</name>
</gene>
<evidence type="ECO:0000305" key="1"/>
<comment type="similarity">
    <text evidence="1">Belongs to the coronaviruses ns4/ns4.8 protein family.</text>
</comment>
<accession>P0C2R2</accession>
<accession>Q9QAR3</accession>
<organismHost>
    <name type="scientific">Bos taurus</name>
    <name type="common">Bovine</name>
    <dbReference type="NCBI Taxonomy" id="9913"/>
</organismHost>
<dbReference type="EMBL" id="AF391542">
    <property type="protein sequence ID" value="AAL57310.1"/>
    <property type="molecule type" value="Genomic_RNA"/>
</dbReference>
<dbReference type="Proteomes" id="UP000008571">
    <property type="component" value="Genome"/>
</dbReference>
<dbReference type="InterPro" id="IPR005603">
    <property type="entry name" value="Corona_NS4"/>
</dbReference>
<dbReference type="Pfam" id="PF03905">
    <property type="entry name" value="Corona_NS4"/>
    <property type="match status" value="1"/>
</dbReference>
<sequence length="45" mass="4855">MPMATTIEGADYTNIMPITVLTTVYLGVSIGIDTSTTGFTCFSRY</sequence>
<organism>
    <name type="scientific">Bovine coronavirus (strain 98TXSF-110-LUN)</name>
    <name type="common">BCoV-LUN</name>
    <name type="synonym">BCV</name>
    <dbReference type="NCBI Taxonomy" id="233264"/>
    <lineage>
        <taxon>Viruses</taxon>
        <taxon>Riboviria</taxon>
        <taxon>Orthornavirae</taxon>
        <taxon>Pisuviricota</taxon>
        <taxon>Pisoniviricetes</taxon>
        <taxon>Nidovirales</taxon>
        <taxon>Cornidovirineae</taxon>
        <taxon>Coronaviridae</taxon>
        <taxon>Orthocoronavirinae</taxon>
        <taxon>Betacoronavirus</taxon>
        <taxon>Embecovirus</taxon>
        <taxon>Betacoronavirus 1</taxon>
    </lineage>
</organism>